<dbReference type="EMBL" id="EF455602">
    <property type="protein sequence ID" value="AAC00562.1"/>
    <property type="molecule type" value="Genomic_DNA"/>
</dbReference>
<dbReference type="PIR" id="D45691">
    <property type="entry name" value="D45691"/>
</dbReference>
<dbReference type="RefSeq" id="YP_001285884.1">
    <property type="nucleotide sequence ID" value="NC_009554.1"/>
</dbReference>
<dbReference type="GeneID" id="5220403"/>
<dbReference type="KEGG" id="vg:5220403"/>
<dbReference type="OrthoDB" id="31421at10239"/>
<dbReference type="Proteomes" id="UP000001922">
    <property type="component" value="Genome"/>
</dbReference>
<name>YG34_BPLLH</name>
<sequence>MKPYLTTSDFEKLGYELKKPDNFGKLLKSATVLINQICSYYDPAFAYHDLEADSQADPDSYLFRQAMAFKKAVALEMLFLEDSGYSSAYDVAQGALNSFTVGHTSMSLNPSAGQNLTVGSTGVVKSAYDLLGRYGLLFSGVASL</sequence>
<reference key="1">
    <citation type="journal article" date="1993" name="J. Virol.">
        <title>Molecular comparison of the structural proteins encoding gene clusters of two related Lactobacillus delbrueckii bacteriophages.</title>
        <authorList>
            <person name="Vasala A."/>
            <person name="Dupont L."/>
            <person name="Baumann M."/>
            <person name="Ritzenthaler P."/>
            <person name="Alatossava T."/>
        </authorList>
    </citation>
    <scope>NUCLEOTIDE SEQUENCE [GENOMIC DNA]</scope>
</reference>
<keyword id="KW-1185">Reference proteome</keyword>
<feature type="chain" id="PRO_0000066223" description="Uncharacterized protein ORF4">
    <location>
        <begin position="1"/>
        <end position="144"/>
    </location>
</feature>
<proteinExistence type="inferred from homology"/>
<organism>
    <name type="scientific">Lactococcus phage LL-H</name>
    <name type="common">Lactococcus delbrueckii bacteriophage LL-H</name>
    <dbReference type="NCBI Taxonomy" id="12348"/>
    <lineage>
        <taxon>Viruses</taxon>
        <taxon>Duplodnaviria</taxon>
        <taxon>Heunggongvirae</taxon>
        <taxon>Uroviricota</taxon>
        <taxon>Caudoviricetes</taxon>
    </lineage>
</organism>
<accession>Q04768</accession>
<protein>
    <recommendedName>
        <fullName>Uncharacterized protein ORF4</fullName>
    </recommendedName>
</protein>
<evidence type="ECO:0000305" key="1"/>
<organismHost>
    <name type="scientific">Lactobacillus delbrueckii</name>
    <dbReference type="NCBI Taxonomy" id="1584"/>
</organismHost>
<comment type="similarity">
    <text evidence="1">Belongs to the Lactobacillus delbrueckii bacteriophages ORF4 protein family.</text>
</comment>